<name>RL11_METHJ</name>
<accession>Q2FQ31</accession>
<feature type="chain" id="PRO_0000258249" description="Large ribosomal subunit protein uL11">
    <location>
        <begin position="1"/>
        <end position="158"/>
    </location>
</feature>
<organism>
    <name type="scientific">Methanospirillum hungatei JF-1 (strain ATCC 27890 / DSM 864 / NBRC 100397 / JF-1)</name>
    <dbReference type="NCBI Taxonomy" id="323259"/>
    <lineage>
        <taxon>Archaea</taxon>
        <taxon>Methanobacteriati</taxon>
        <taxon>Methanobacteriota</taxon>
        <taxon>Stenosarchaea group</taxon>
        <taxon>Methanomicrobia</taxon>
        <taxon>Methanomicrobiales</taxon>
        <taxon>Methanospirillaceae</taxon>
        <taxon>Methanospirillum</taxon>
    </lineage>
</organism>
<reference key="1">
    <citation type="journal article" date="2016" name="Stand. Genomic Sci.">
        <title>Complete genome sequence of Methanospirillum hungatei type strain JF1.</title>
        <authorList>
            <person name="Gunsalus R.P."/>
            <person name="Cook L.E."/>
            <person name="Crable B."/>
            <person name="Rohlin L."/>
            <person name="McDonald E."/>
            <person name="Mouttaki H."/>
            <person name="Sieber J.R."/>
            <person name="Poweleit N."/>
            <person name="Zhou H."/>
            <person name="Lapidus A.L."/>
            <person name="Daligault H.E."/>
            <person name="Land M."/>
            <person name="Gilna P."/>
            <person name="Ivanova N."/>
            <person name="Kyrpides N."/>
            <person name="Culley D.E."/>
            <person name="McInerney M.J."/>
        </authorList>
    </citation>
    <scope>NUCLEOTIDE SEQUENCE [LARGE SCALE GENOMIC DNA]</scope>
    <source>
        <strain>ATCC 27890 / DSM 864 / NBRC 100397 / JF-1</strain>
    </source>
</reference>
<evidence type="ECO:0000255" key="1">
    <source>
        <dbReference type="HAMAP-Rule" id="MF_00736"/>
    </source>
</evidence>
<evidence type="ECO:0000305" key="2"/>
<sequence length="158" mass="16316">MAEVVEVLVPGGKATAGPPLGPALGPLGINVKAVVDEINKKTASFNGMQVPVRVEVDEKKNFTISVGIPPTTALIMKEAGVEKGSGEPNTKIVGDVPLEAAVTIAKMKLDDMLSYDLKNAVKEVVGTCVSLGITVSGKKPKDMLKEIDSGAHDAVLVG</sequence>
<keyword id="KW-1185">Reference proteome</keyword>
<keyword id="KW-0687">Ribonucleoprotein</keyword>
<keyword id="KW-0689">Ribosomal protein</keyword>
<keyword id="KW-0694">RNA-binding</keyword>
<keyword id="KW-0699">rRNA-binding</keyword>
<dbReference type="EMBL" id="CP000254">
    <property type="protein sequence ID" value="ABD40413.1"/>
    <property type="molecule type" value="Genomic_DNA"/>
</dbReference>
<dbReference type="RefSeq" id="WP_011447697.1">
    <property type="nucleotide sequence ID" value="NC_007796.1"/>
</dbReference>
<dbReference type="SMR" id="Q2FQ31"/>
<dbReference type="FunCoup" id="Q2FQ31">
    <property type="interactions" value="153"/>
</dbReference>
<dbReference type="STRING" id="323259.Mhun_0657"/>
<dbReference type="EnsemblBacteria" id="ABD40413">
    <property type="protein sequence ID" value="ABD40413"/>
    <property type="gene ID" value="Mhun_0657"/>
</dbReference>
<dbReference type="GeneID" id="3923481"/>
<dbReference type="KEGG" id="mhu:Mhun_0657"/>
<dbReference type="eggNOG" id="arCOG04372">
    <property type="taxonomic scope" value="Archaea"/>
</dbReference>
<dbReference type="HOGENOM" id="CLU_074237_4_0_2"/>
<dbReference type="InParanoid" id="Q2FQ31"/>
<dbReference type="OrthoDB" id="8842at2157"/>
<dbReference type="Proteomes" id="UP000001941">
    <property type="component" value="Chromosome"/>
</dbReference>
<dbReference type="GO" id="GO:0015934">
    <property type="term" value="C:large ribosomal subunit"/>
    <property type="evidence" value="ECO:0007669"/>
    <property type="project" value="TreeGrafter"/>
</dbReference>
<dbReference type="GO" id="GO:0070180">
    <property type="term" value="F:large ribosomal subunit rRNA binding"/>
    <property type="evidence" value="ECO:0007669"/>
    <property type="project" value="UniProtKB-UniRule"/>
</dbReference>
<dbReference type="GO" id="GO:0003735">
    <property type="term" value="F:structural constituent of ribosome"/>
    <property type="evidence" value="ECO:0007669"/>
    <property type="project" value="InterPro"/>
</dbReference>
<dbReference type="GO" id="GO:0006412">
    <property type="term" value="P:translation"/>
    <property type="evidence" value="ECO:0007669"/>
    <property type="project" value="UniProtKB-UniRule"/>
</dbReference>
<dbReference type="CDD" id="cd00349">
    <property type="entry name" value="Ribosomal_L11"/>
    <property type="match status" value="1"/>
</dbReference>
<dbReference type="FunFam" id="3.30.1550.10:FF:000007">
    <property type="entry name" value="50S ribosomal protein L11"/>
    <property type="match status" value="1"/>
</dbReference>
<dbReference type="Gene3D" id="1.10.10.250">
    <property type="entry name" value="Ribosomal protein L11, C-terminal domain"/>
    <property type="match status" value="1"/>
</dbReference>
<dbReference type="Gene3D" id="3.30.1550.10">
    <property type="entry name" value="Ribosomal protein L11/L12, N-terminal domain"/>
    <property type="match status" value="1"/>
</dbReference>
<dbReference type="HAMAP" id="MF_00736">
    <property type="entry name" value="Ribosomal_uL11"/>
    <property type="match status" value="1"/>
</dbReference>
<dbReference type="InterPro" id="IPR000911">
    <property type="entry name" value="Ribosomal_uL11"/>
</dbReference>
<dbReference type="InterPro" id="IPR020783">
    <property type="entry name" value="Ribosomal_uL11_C"/>
</dbReference>
<dbReference type="InterPro" id="IPR036769">
    <property type="entry name" value="Ribosomal_uL11_C_sf"/>
</dbReference>
<dbReference type="InterPro" id="IPR020785">
    <property type="entry name" value="Ribosomal_uL11_CS"/>
</dbReference>
<dbReference type="InterPro" id="IPR020784">
    <property type="entry name" value="Ribosomal_uL11_N"/>
</dbReference>
<dbReference type="InterPro" id="IPR036796">
    <property type="entry name" value="Ribosomal_uL11_N_sf"/>
</dbReference>
<dbReference type="NCBIfam" id="NF002232">
    <property type="entry name" value="PRK01143.1"/>
    <property type="match status" value="1"/>
</dbReference>
<dbReference type="PANTHER" id="PTHR11661">
    <property type="entry name" value="60S RIBOSOMAL PROTEIN L12"/>
    <property type="match status" value="1"/>
</dbReference>
<dbReference type="PANTHER" id="PTHR11661:SF1">
    <property type="entry name" value="LARGE RIBOSOMAL SUBUNIT PROTEIN UL11M"/>
    <property type="match status" value="1"/>
</dbReference>
<dbReference type="Pfam" id="PF00298">
    <property type="entry name" value="Ribosomal_L11"/>
    <property type="match status" value="1"/>
</dbReference>
<dbReference type="Pfam" id="PF03946">
    <property type="entry name" value="Ribosomal_L11_N"/>
    <property type="match status" value="1"/>
</dbReference>
<dbReference type="SMART" id="SM00649">
    <property type="entry name" value="RL11"/>
    <property type="match status" value="1"/>
</dbReference>
<dbReference type="SUPFAM" id="SSF54747">
    <property type="entry name" value="Ribosomal L11/L12e N-terminal domain"/>
    <property type="match status" value="1"/>
</dbReference>
<dbReference type="SUPFAM" id="SSF46906">
    <property type="entry name" value="Ribosomal protein L11, C-terminal domain"/>
    <property type="match status" value="1"/>
</dbReference>
<dbReference type="PROSITE" id="PS00359">
    <property type="entry name" value="RIBOSOMAL_L11"/>
    <property type="match status" value="1"/>
</dbReference>
<comment type="function">
    <text evidence="1">Forms part of the ribosomal stalk which helps the ribosome interact with GTP-bound translation factors.</text>
</comment>
<comment type="subunit">
    <text evidence="1">Part of the ribosomal stalk of the 50S ribosomal subunit. Interacts with L10 and the large rRNA to form the base of the stalk. L10 forms an elongated spine to which L12 dimers bind in a sequential fashion forming a multimeric L10(L12)X complex.</text>
</comment>
<comment type="similarity">
    <text evidence="1">Belongs to the universal ribosomal protein uL11 family.</text>
</comment>
<gene>
    <name evidence="1" type="primary">rpl11</name>
    <name type="ordered locus">Mhun_0657</name>
</gene>
<protein>
    <recommendedName>
        <fullName evidence="1">Large ribosomal subunit protein uL11</fullName>
    </recommendedName>
    <alternativeName>
        <fullName evidence="2">50S ribosomal protein L11</fullName>
    </alternativeName>
</protein>
<proteinExistence type="inferred from homology"/>